<name>YQHA_ECOHS</name>
<comment type="subcellular location">
    <subcellularLocation>
        <location evidence="1">Cell membrane</location>
        <topology evidence="1">Multi-pass membrane protein</topology>
    </subcellularLocation>
</comment>
<comment type="similarity">
    <text evidence="1">Belongs to the UPF0114 family.</text>
</comment>
<keyword id="KW-1003">Cell membrane</keyword>
<keyword id="KW-0472">Membrane</keyword>
<keyword id="KW-0812">Transmembrane</keyword>
<keyword id="KW-1133">Transmembrane helix</keyword>
<accession>A8A4G1</accession>
<sequence length="164" mass="18641">MERFLENAMYASRWLLAPVYFGLSLALVALALKFFQEIIHVLPNIFSMAESDLILVLLSLVDMTLVGGLLVMVMFSGYENFVSQLDISENKEKLNWLGKMDATSLKNKVAASIVAISSIHLLRVFMDAKNVPDNKLMWYVIIHLTFVLSAFVMGYLDRLTRHNH</sequence>
<protein>
    <recommendedName>
        <fullName evidence="1">UPF0114 protein YqhA</fullName>
    </recommendedName>
</protein>
<gene>
    <name evidence="1" type="primary">yqhA</name>
    <name type="ordered locus">EcHS_A3181</name>
</gene>
<organism>
    <name type="scientific">Escherichia coli O9:H4 (strain HS)</name>
    <dbReference type="NCBI Taxonomy" id="331112"/>
    <lineage>
        <taxon>Bacteria</taxon>
        <taxon>Pseudomonadati</taxon>
        <taxon>Pseudomonadota</taxon>
        <taxon>Gammaproteobacteria</taxon>
        <taxon>Enterobacterales</taxon>
        <taxon>Enterobacteriaceae</taxon>
        <taxon>Escherichia</taxon>
    </lineage>
</organism>
<proteinExistence type="inferred from homology"/>
<evidence type="ECO:0000255" key="1">
    <source>
        <dbReference type="HAMAP-Rule" id="MF_00143"/>
    </source>
</evidence>
<reference key="1">
    <citation type="journal article" date="2008" name="J. Bacteriol.">
        <title>The pangenome structure of Escherichia coli: comparative genomic analysis of E. coli commensal and pathogenic isolates.</title>
        <authorList>
            <person name="Rasko D.A."/>
            <person name="Rosovitz M.J."/>
            <person name="Myers G.S.A."/>
            <person name="Mongodin E.F."/>
            <person name="Fricke W.F."/>
            <person name="Gajer P."/>
            <person name="Crabtree J."/>
            <person name="Sebaihia M."/>
            <person name="Thomson N.R."/>
            <person name="Chaudhuri R."/>
            <person name="Henderson I.R."/>
            <person name="Sperandio V."/>
            <person name="Ravel J."/>
        </authorList>
    </citation>
    <scope>NUCLEOTIDE SEQUENCE [LARGE SCALE GENOMIC DNA]</scope>
    <source>
        <strain>HS</strain>
    </source>
</reference>
<dbReference type="EMBL" id="CP000802">
    <property type="protein sequence ID" value="ABV07415.1"/>
    <property type="molecule type" value="Genomic_DNA"/>
</dbReference>
<dbReference type="RefSeq" id="WP_000439331.1">
    <property type="nucleotide sequence ID" value="NC_009800.1"/>
</dbReference>
<dbReference type="KEGG" id="ecx:EcHS_A3181"/>
<dbReference type="HOGENOM" id="CLU_097887_1_1_6"/>
<dbReference type="GO" id="GO:0005886">
    <property type="term" value="C:plasma membrane"/>
    <property type="evidence" value="ECO:0007669"/>
    <property type="project" value="UniProtKB-SubCell"/>
</dbReference>
<dbReference type="HAMAP" id="MF_00143">
    <property type="entry name" value="UPF0114"/>
    <property type="match status" value="1"/>
</dbReference>
<dbReference type="InterPro" id="IPR005134">
    <property type="entry name" value="UPF0114"/>
</dbReference>
<dbReference type="InterPro" id="IPR020761">
    <property type="entry name" value="UPF0114_bac"/>
</dbReference>
<dbReference type="NCBIfam" id="TIGR00645">
    <property type="entry name" value="HI0507"/>
    <property type="match status" value="1"/>
</dbReference>
<dbReference type="PANTHER" id="PTHR38596">
    <property type="entry name" value="UPF0114 PROTEIN YQHA"/>
    <property type="match status" value="1"/>
</dbReference>
<dbReference type="PANTHER" id="PTHR38596:SF1">
    <property type="entry name" value="UPF0114 PROTEIN YQHA"/>
    <property type="match status" value="1"/>
</dbReference>
<dbReference type="Pfam" id="PF03350">
    <property type="entry name" value="UPF0114"/>
    <property type="match status" value="1"/>
</dbReference>
<feature type="chain" id="PRO_1000057936" description="UPF0114 protein YqhA">
    <location>
        <begin position="1"/>
        <end position="164"/>
    </location>
</feature>
<feature type="transmembrane region" description="Helical" evidence="1">
    <location>
        <begin position="15"/>
        <end position="35"/>
    </location>
</feature>
<feature type="transmembrane region" description="Helical" evidence="1">
    <location>
        <begin position="53"/>
        <end position="73"/>
    </location>
</feature>
<feature type="transmembrane region" description="Helical" evidence="1">
    <location>
        <begin position="136"/>
        <end position="156"/>
    </location>
</feature>